<protein>
    <recommendedName>
        <fullName evidence="1">ATP synthase gamma chain</fullName>
    </recommendedName>
    <alternativeName>
        <fullName evidence="1">ATP synthase F1 sector gamma subunit</fullName>
    </alternativeName>
    <alternativeName>
        <fullName evidence="1">F-ATPase gamma subunit</fullName>
    </alternativeName>
</protein>
<gene>
    <name evidence="1" type="primary">atpG</name>
    <name type="ordered locus">HD_0009</name>
</gene>
<keyword id="KW-0066">ATP synthesis</keyword>
<keyword id="KW-0997">Cell inner membrane</keyword>
<keyword id="KW-1003">Cell membrane</keyword>
<keyword id="KW-0139">CF(1)</keyword>
<keyword id="KW-0375">Hydrogen ion transport</keyword>
<keyword id="KW-0406">Ion transport</keyword>
<keyword id="KW-0472">Membrane</keyword>
<keyword id="KW-1185">Reference proteome</keyword>
<keyword id="KW-0813">Transport</keyword>
<organism>
    <name type="scientific">Haemophilus ducreyi (strain 35000HP / ATCC 700724)</name>
    <dbReference type="NCBI Taxonomy" id="233412"/>
    <lineage>
        <taxon>Bacteria</taxon>
        <taxon>Pseudomonadati</taxon>
        <taxon>Pseudomonadota</taxon>
        <taxon>Gammaproteobacteria</taxon>
        <taxon>Pasteurellales</taxon>
        <taxon>Pasteurellaceae</taxon>
        <taxon>Haemophilus</taxon>
    </lineage>
</organism>
<sequence>MAGAKEIRTKIASVRNTQKITKAMEMVATSKMRKTQERMAAGRPYSETIRKVISHIAKGSIGYKHPFLIERDVKKVGYLVISTDRGLCGGLNINLFKTTLNEFKAWKDKDVSVELGLVGSKGVSFYQSIGLKVRAHITGLGDSPEMERIVGAVNEMINAYRNGEVDMVCIAYNRFENTMSQKTVIAQLLPLPKLENDELETKCSWDYLYEPNPQVLLDSLLIRYLETQVYQAVVDNLASEQAARMVAMKAATDNAGALIDELQLVYNKARQASITNELNEIVAGAAAI</sequence>
<accession>Q7VPP1</accession>
<proteinExistence type="inferred from homology"/>
<dbReference type="EMBL" id="AE017143">
    <property type="protein sequence ID" value="AAP95033.1"/>
    <property type="molecule type" value="Genomic_DNA"/>
</dbReference>
<dbReference type="RefSeq" id="WP_010944087.1">
    <property type="nucleotide sequence ID" value="NC_002940.2"/>
</dbReference>
<dbReference type="SMR" id="Q7VPP1"/>
<dbReference type="STRING" id="233412.HD_0009"/>
<dbReference type="KEGG" id="hdu:HD_0009"/>
<dbReference type="eggNOG" id="COG0224">
    <property type="taxonomic scope" value="Bacteria"/>
</dbReference>
<dbReference type="HOGENOM" id="CLU_050669_0_1_6"/>
<dbReference type="OrthoDB" id="9812769at2"/>
<dbReference type="Proteomes" id="UP000001022">
    <property type="component" value="Chromosome"/>
</dbReference>
<dbReference type="GO" id="GO:0005886">
    <property type="term" value="C:plasma membrane"/>
    <property type="evidence" value="ECO:0007669"/>
    <property type="project" value="UniProtKB-SubCell"/>
</dbReference>
<dbReference type="GO" id="GO:0045259">
    <property type="term" value="C:proton-transporting ATP synthase complex"/>
    <property type="evidence" value="ECO:0007669"/>
    <property type="project" value="UniProtKB-KW"/>
</dbReference>
<dbReference type="GO" id="GO:0005524">
    <property type="term" value="F:ATP binding"/>
    <property type="evidence" value="ECO:0007669"/>
    <property type="project" value="UniProtKB-UniRule"/>
</dbReference>
<dbReference type="GO" id="GO:0046933">
    <property type="term" value="F:proton-transporting ATP synthase activity, rotational mechanism"/>
    <property type="evidence" value="ECO:0007669"/>
    <property type="project" value="UniProtKB-UniRule"/>
</dbReference>
<dbReference type="GO" id="GO:0042777">
    <property type="term" value="P:proton motive force-driven plasma membrane ATP synthesis"/>
    <property type="evidence" value="ECO:0007669"/>
    <property type="project" value="UniProtKB-UniRule"/>
</dbReference>
<dbReference type="CDD" id="cd12151">
    <property type="entry name" value="F1-ATPase_gamma"/>
    <property type="match status" value="1"/>
</dbReference>
<dbReference type="FunFam" id="1.10.287.80:FF:000005">
    <property type="entry name" value="ATP synthase gamma chain"/>
    <property type="match status" value="2"/>
</dbReference>
<dbReference type="Gene3D" id="3.40.1380.10">
    <property type="match status" value="1"/>
</dbReference>
<dbReference type="Gene3D" id="1.10.287.80">
    <property type="entry name" value="ATP synthase, gamma subunit, helix hairpin domain"/>
    <property type="match status" value="1"/>
</dbReference>
<dbReference type="HAMAP" id="MF_00815">
    <property type="entry name" value="ATP_synth_gamma_bact"/>
    <property type="match status" value="1"/>
</dbReference>
<dbReference type="InterPro" id="IPR035968">
    <property type="entry name" value="ATP_synth_F1_ATPase_gsu"/>
</dbReference>
<dbReference type="InterPro" id="IPR000131">
    <property type="entry name" value="ATP_synth_F1_gsu"/>
</dbReference>
<dbReference type="InterPro" id="IPR023632">
    <property type="entry name" value="ATP_synth_F1_gsu_CS"/>
</dbReference>
<dbReference type="NCBIfam" id="TIGR01146">
    <property type="entry name" value="ATPsyn_F1gamma"/>
    <property type="match status" value="1"/>
</dbReference>
<dbReference type="NCBIfam" id="NF004144">
    <property type="entry name" value="PRK05621.1-1"/>
    <property type="match status" value="1"/>
</dbReference>
<dbReference type="PANTHER" id="PTHR11693">
    <property type="entry name" value="ATP SYNTHASE GAMMA CHAIN"/>
    <property type="match status" value="1"/>
</dbReference>
<dbReference type="PANTHER" id="PTHR11693:SF22">
    <property type="entry name" value="ATP SYNTHASE SUBUNIT GAMMA, MITOCHONDRIAL"/>
    <property type="match status" value="1"/>
</dbReference>
<dbReference type="Pfam" id="PF00231">
    <property type="entry name" value="ATP-synt"/>
    <property type="match status" value="1"/>
</dbReference>
<dbReference type="PRINTS" id="PR00126">
    <property type="entry name" value="ATPASEGAMMA"/>
</dbReference>
<dbReference type="SUPFAM" id="SSF52943">
    <property type="entry name" value="ATP synthase (F1-ATPase), gamma subunit"/>
    <property type="match status" value="1"/>
</dbReference>
<dbReference type="PROSITE" id="PS00153">
    <property type="entry name" value="ATPASE_GAMMA"/>
    <property type="match status" value="1"/>
</dbReference>
<comment type="function">
    <text evidence="1">Produces ATP from ADP in the presence of a proton gradient across the membrane. The gamma chain is believed to be important in regulating ATPase activity and the flow of protons through the CF(0) complex.</text>
</comment>
<comment type="subunit">
    <text evidence="1">F-type ATPases have 2 components, CF(1) - the catalytic core - and CF(0) - the membrane proton channel. CF(1) has five subunits: alpha(3), beta(3), gamma(1), delta(1), epsilon(1). CF(0) has three main subunits: a, b and c.</text>
</comment>
<comment type="subcellular location">
    <subcellularLocation>
        <location evidence="1">Cell inner membrane</location>
        <topology evidence="1">Peripheral membrane protein</topology>
    </subcellularLocation>
</comment>
<comment type="similarity">
    <text evidence="1">Belongs to the ATPase gamma chain family.</text>
</comment>
<evidence type="ECO:0000255" key="1">
    <source>
        <dbReference type="HAMAP-Rule" id="MF_00815"/>
    </source>
</evidence>
<name>ATPG_HAEDU</name>
<feature type="chain" id="PRO_0000073291" description="ATP synthase gamma chain">
    <location>
        <begin position="1"/>
        <end position="288"/>
    </location>
</feature>
<reference key="1">
    <citation type="submission" date="2003-06" db="EMBL/GenBank/DDBJ databases">
        <title>The complete genome sequence of Haemophilus ducreyi.</title>
        <authorList>
            <person name="Munson R.S. Jr."/>
            <person name="Ray W.C."/>
            <person name="Mahairas G."/>
            <person name="Sabo P."/>
            <person name="Mungur R."/>
            <person name="Johnson L."/>
            <person name="Nguyen D."/>
            <person name="Wang J."/>
            <person name="Forst C."/>
            <person name="Hood L."/>
        </authorList>
    </citation>
    <scope>NUCLEOTIDE SEQUENCE [LARGE SCALE GENOMIC DNA]</scope>
    <source>
        <strain>35000HP / ATCC 700724</strain>
    </source>
</reference>